<evidence type="ECO:0000250" key="1"/>
<evidence type="ECO:0000250" key="2">
    <source>
        <dbReference type="UniProtKB" id="Q6SJQ7"/>
    </source>
</evidence>
<evidence type="ECO:0000250" key="3">
    <source>
        <dbReference type="UniProtKB" id="Q8TDQ1"/>
    </source>
</evidence>
<evidence type="ECO:0000255" key="4"/>
<evidence type="ECO:0000256" key="5">
    <source>
        <dbReference type="SAM" id="MobiDB-lite"/>
    </source>
</evidence>
<evidence type="ECO:0000305" key="6"/>
<keyword id="KW-1003">Cell membrane</keyword>
<keyword id="KW-1015">Disulfide bond</keyword>
<keyword id="KW-0325">Glycoprotein</keyword>
<keyword id="KW-0391">Immunity</keyword>
<keyword id="KW-0393">Immunoglobulin domain</keyword>
<keyword id="KW-0446">Lipid-binding</keyword>
<keyword id="KW-0472">Membrane</keyword>
<keyword id="KW-0597">Phosphoprotein</keyword>
<keyword id="KW-0675">Receptor</keyword>
<keyword id="KW-1185">Reference proteome</keyword>
<keyword id="KW-0732">Signal</keyword>
<keyword id="KW-0812">Transmembrane</keyword>
<keyword id="KW-1133">Transmembrane helix</keyword>
<organism>
    <name type="scientific">Rattus norvegicus</name>
    <name type="common">Rat</name>
    <dbReference type="NCBI Taxonomy" id="10116"/>
    <lineage>
        <taxon>Eukaryota</taxon>
        <taxon>Metazoa</taxon>
        <taxon>Chordata</taxon>
        <taxon>Craniata</taxon>
        <taxon>Vertebrata</taxon>
        <taxon>Euteleostomi</taxon>
        <taxon>Mammalia</taxon>
        <taxon>Eutheria</taxon>
        <taxon>Euarchontoglires</taxon>
        <taxon>Glires</taxon>
        <taxon>Rodentia</taxon>
        <taxon>Myomorpha</taxon>
        <taxon>Muroidea</taxon>
        <taxon>Muridae</taxon>
        <taxon>Murinae</taxon>
        <taxon>Rattus</taxon>
    </lineage>
</organism>
<accession>Q566E6</accession>
<comment type="function">
    <text evidence="2 3">Acts as an inhibitory receptor for myeloid cells and mast cells. Positively regulates the phagocytosis of apoptotic cells (efferocytosis) via phosphatidylserine (PS) recognition; recognizes and binds PS as a ligand which is expressed on the surface of apoptotic cells. Plays an important role in the maintenance of immune homeostasis, by promoting macrophage-mediated efferocytosis and by inhibiting dendritic cell-mediated efferocytosis. Negatively regulates Fc epsilon receptor-dependent mast cell activation and allergic responses via binding to ceramide and sphingomyelin which act as ligands. May act as a coreceptor for interleukin 4 (IL-4). Associates with and regulates IL-4 receptor alpha-mediated responses by augmenting IL-4- and IL-13-induced signaling. Negatively regulates the Toll-like receptor (TLR) signaling mediated by MYD88 and TRIF through activation of PTPN6/SHP-1 and PTPN11/SHP-2. Inhibits osteoclast formation. Induces macrophage cell death upon engagement.</text>
</comment>
<comment type="subunit">
    <text evidence="2">Interacts with PTPN6/SHP-1 in a tyrosine phosphorylation dependent manner. Interacts with IL4R.</text>
</comment>
<comment type="subcellular location">
    <subcellularLocation>
        <location evidence="6">Cell membrane</location>
        <topology evidence="6">Single-pass type I membrane protein</topology>
    </subcellularLocation>
</comment>
<comment type="PTM">
    <text evidence="2">Phosphorylated on tyrosine.</text>
</comment>
<comment type="similarity">
    <text evidence="6">Belongs to the CD300 family.</text>
</comment>
<name>CLM1_RAT</name>
<protein>
    <recommendedName>
        <fullName>CMRF35-like molecule 1</fullName>
        <shortName>CLM-1</shortName>
    </recommendedName>
    <alternativeName>
        <fullName>CD300 antigen-like family member F</fullName>
    </alternativeName>
    <cdAntigenName>CD300f</cdAntigenName>
</protein>
<sequence length="332" mass="36823">MHLSLLALFLFWISGCFTAQDPVTGPEEVSGYEQGSLTVWCRYGSWWKDYSKYWCRGPKRSSCEIRVETDASERLVKENHVSIRDDQTNFTFTVTMEDLRMSDAGIYWCGITKAGYDHMFKVHVSINPVPTTPTTTSTTTIFTVTTTVKETSTLSTQTSHYSDNRYDSGGVGDGNGFLDLSVLLPVISAALLLLLLVVSLIAWRMVRRQKKAAGPPSGQADSVTHILCPPKPHVQPLEDDLCYANLSLQQPRTSPLKKGSSMSSSGKDHQEEVEYVTMAPFPREEISYAALSLASLGQEPTYSNTACLVTHGPRTNLGEETTEYSSIRRPMP</sequence>
<feature type="signal peptide" evidence="4">
    <location>
        <begin position="1"/>
        <end position="18"/>
    </location>
</feature>
<feature type="chain" id="PRO_0000247827" description="CMRF35-like molecule 1">
    <location>
        <begin position="19"/>
        <end position="332"/>
    </location>
</feature>
<feature type="topological domain" description="Extracellular" evidence="4">
    <location>
        <begin position="19"/>
        <end position="181"/>
    </location>
</feature>
<feature type="transmembrane region" description="Helical" evidence="4">
    <location>
        <begin position="182"/>
        <end position="202"/>
    </location>
</feature>
<feature type="topological domain" description="Cytoplasmic" evidence="4">
    <location>
        <begin position="203"/>
        <end position="332"/>
    </location>
</feature>
<feature type="domain" description="Ig-like V-type">
    <location>
        <begin position="22"/>
        <end position="125"/>
    </location>
</feature>
<feature type="region of interest" description="Disordered" evidence="5">
    <location>
        <begin position="251"/>
        <end position="270"/>
    </location>
</feature>
<feature type="region of interest" description="Disordered" evidence="5">
    <location>
        <begin position="313"/>
        <end position="332"/>
    </location>
</feature>
<feature type="site" description="Phosphatase-binding" evidence="1">
    <location>
        <position position="243"/>
    </location>
</feature>
<feature type="glycosylation site" description="N-linked (GlcNAc...) asparagine" evidence="4">
    <location>
        <position position="89"/>
    </location>
</feature>
<feature type="disulfide bond" evidence="2">
    <location>
        <begin position="41"/>
        <end position="109"/>
    </location>
</feature>
<feature type="disulfide bond" evidence="2">
    <location>
        <begin position="55"/>
        <end position="63"/>
    </location>
</feature>
<reference key="1">
    <citation type="journal article" date="2004" name="Genome Res.">
        <title>The status, quality, and expansion of the NIH full-length cDNA project: the Mammalian Gene Collection (MGC).</title>
        <authorList>
            <consortium name="The MGC Project Team"/>
        </authorList>
    </citation>
    <scope>NUCLEOTIDE SEQUENCE [LARGE SCALE MRNA]</scope>
    <source>
        <tissue>Brain</tissue>
    </source>
</reference>
<gene>
    <name type="primary">Cd300lf</name>
    <name type="synonym">Clm1</name>
</gene>
<proteinExistence type="evidence at transcript level"/>
<dbReference type="EMBL" id="BC093593">
    <property type="protein sequence ID" value="AAH93593.1"/>
    <property type="molecule type" value="mRNA"/>
</dbReference>
<dbReference type="RefSeq" id="NP_001020282.1">
    <property type="nucleotide sequence ID" value="NM_001025111.2"/>
</dbReference>
<dbReference type="SMR" id="Q566E6"/>
<dbReference type="FunCoup" id="Q566E6">
    <property type="interactions" value="95"/>
</dbReference>
<dbReference type="STRING" id="10116.ENSRNOP00000033887"/>
<dbReference type="GlyCosmos" id="Q566E6">
    <property type="glycosylation" value="1 site, No reported glycans"/>
</dbReference>
<dbReference type="GlyGen" id="Q566E6">
    <property type="glycosylation" value="1 site"/>
</dbReference>
<dbReference type="PhosphoSitePlus" id="Q566E6"/>
<dbReference type="PaxDb" id="10116-ENSRNOP00000033887"/>
<dbReference type="Ensembl" id="ENSRNOT00000039284.6">
    <property type="protein sequence ID" value="ENSRNOP00000033887.6"/>
    <property type="gene ID" value="ENSRNOG00000021424.6"/>
</dbReference>
<dbReference type="GeneID" id="287818"/>
<dbReference type="KEGG" id="rno:287818"/>
<dbReference type="AGR" id="RGD:1309733"/>
<dbReference type="CTD" id="146722"/>
<dbReference type="RGD" id="1309733">
    <property type="gene designation" value="Cd300lf"/>
</dbReference>
<dbReference type="eggNOG" id="ENOG502S7MA">
    <property type="taxonomic scope" value="Eukaryota"/>
</dbReference>
<dbReference type="GeneTree" id="ENSGT00940000154332"/>
<dbReference type="InParanoid" id="Q566E6"/>
<dbReference type="OMA" id="RSHEEPT"/>
<dbReference type="PhylomeDB" id="Q566E6"/>
<dbReference type="TreeFam" id="TF334441"/>
<dbReference type="PRO" id="PR:Q566E6"/>
<dbReference type="Proteomes" id="UP000002494">
    <property type="component" value="Chromosome 10"/>
</dbReference>
<dbReference type="GO" id="GO:0005886">
    <property type="term" value="C:plasma membrane"/>
    <property type="evidence" value="ECO:0000318"/>
    <property type="project" value="GO_Central"/>
</dbReference>
<dbReference type="GO" id="GO:0097001">
    <property type="term" value="F:ceramide binding"/>
    <property type="evidence" value="ECO:0000250"/>
    <property type="project" value="UniProtKB"/>
</dbReference>
<dbReference type="GO" id="GO:0042802">
    <property type="term" value="F:identical protein binding"/>
    <property type="evidence" value="ECO:0000266"/>
    <property type="project" value="RGD"/>
</dbReference>
<dbReference type="GO" id="GO:0005136">
    <property type="term" value="F:interleukin-4 receptor binding"/>
    <property type="evidence" value="ECO:0000250"/>
    <property type="project" value="UniProtKB"/>
</dbReference>
<dbReference type="GO" id="GO:0001786">
    <property type="term" value="F:phosphatidylserine binding"/>
    <property type="evidence" value="ECO:0000250"/>
    <property type="project" value="UniProtKB"/>
</dbReference>
<dbReference type="GO" id="GO:0004888">
    <property type="term" value="F:transmembrane signaling receptor activity"/>
    <property type="evidence" value="ECO:0000318"/>
    <property type="project" value="GO_Central"/>
</dbReference>
<dbReference type="GO" id="GO:0001618">
    <property type="term" value="F:virus receptor activity"/>
    <property type="evidence" value="ECO:0000266"/>
    <property type="project" value="RGD"/>
</dbReference>
<dbReference type="GO" id="GO:0002757">
    <property type="term" value="P:immune response-activating signaling pathway"/>
    <property type="evidence" value="ECO:0000318"/>
    <property type="project" value="GO_Central"/>
</dbReference>
<dbReference type="GO" id="GO:0035772">
    <property type="term" value="P:interleukin-13-mediated signaling pathway"/>
    <property type="evidence" value="ECO:0000250"/>
    <property type="project" value="UniProtKB"/>
</dbReference>
<dbReference type="GO" id="GO:2000426">
    <property type="term" value="P:negative regulation of apoptotic cell clearance"/>
    <property type="evidence" value="ECO:0000250"/>
    <property type="project" value="UniProtKB"/>
</dbReference>
<dbReference type="GO" id="GO:0033004">
    <property type="term" value="P:negative regulation of mast cell activation"/>
    <property type="evidence" value="ECO:0000250"/>
    <property type="project" value="UniProtKB"/>
</dbReference>
<dbReference type="GO" id="GO:0034125">
    <property type="term" value="P:negative regulation of MyD88-dependent toll-like receptor signaling pathway"/>
    <property type="evidence" value="ECO:0000250"/>
    <property type="project" value="UniProtKB"/>
</dbReference>
<dbReference type="GO" id="GO:0030316">
    <property type="term" value="P:osteoclast differentiation"/>
    <property type="evidence" value="ECO:0000266"/>
    <property type="project" value="RGD"/>
</dbReference>
<dbReference type="GO" id="GO:2000427">
    <property type="term" value="P:positive regulation of apoptotic cell clearance"/>
    <property type="evidence" value="ECO:0000250"/>
    <property type="project" value="UniProtKB"/>
</dbReference>
<dbReference type="GO" id="GO:1902216">
    <property type="term" value="P:positive regulation of interleukin-4-mediated signaling pathway"/>
    <property type="evidence" value="ECO:0000250"/>
    <property type="project" value="UniProtKB"/>
</dbReference>
<dbReference type="GO" id="GO:0035666">
    <property type="term" value="P:TRIF-dependent toll-like receptor signaling pathway"/>
    <property type="evidence" value="ECO:0000250"/>
    <property type="project" value="UniProtKB"/>
</dbReference>
<dbReference type="CDD" id="cd05716">
    <property type="entry name" value="IgV_pIgR_like"/>
    <property type="match status" value="1"/>
</dbReference>
<dbReference type="FunFam" id="2.60.40.10:FF:000370">
    <property type="entry name" value="CMRF35-like molecule 1"/>
    <property type="match status" value="1"/>
</dbReference>
<dbReference type="Gene3D" id="2.60.40.10">
    <property type="entry name" value="Immunoglobulins"/>
    <property type="match status" value="1"/>
</dbReference>
<dbReference type="InterPro" id="IPR050671">
    <property type="entry name" value="CD300_family_receptors"/>
</dbReference>
<dbReference type="InterPro" id="IPR036179">
    <property type="entry name" value="Ig-like_dom_sf"/>
</dbReference>
<dbReference type="InterPro" id="IPR013783">
    <property type="entry name" value="Ig-like_fold"/>
</dbReference>
<dbReference type="InterPro" id="IPR003599">
    <property type="entry name" value="Ig_sub"/>
</dbReference>
<dbReference type="InterPro" id="IPR013106">
    <property type="entry name" value="Ig_V-set"/>
</dbReference>
<dbReference type="PANTHER" id="PTHR11860:SF101">
    <property type="entry name" value="CMRF35-LIKE MOLECULE 1"/>
    <property type="match status" value="1"/>
</dbReference>
<dbReference type="PANTHER" id="PTHR11860">
    <property type="entry name" value="POLYMERIC-IMMUNOGLOBULIN RECEPTOR"/>
    <property type="match status" value="1"/>
</dbReference>
<dbReference type="Pfam" id="PF15330">
    <property type="entry name" value="SIT"/>
    <property type="match status" value="1"/>
</dbReference>
<dbReference type="Pfam" id="PF07686">
    <property type="entry name" value="V-set"/>
    <property type="match status" value="1"/>
</dbReference>
<dbReference type="SMART" id="SM00409">
    <property type="entry name" value="IG"/>
    <property type="match status" value="1"/>
</dbReference>
<dbReference type="SUPFAM" id="SSF48726">
    <property type="entry name" value="Immunoglobulin"/>
    <property type="match status" value="1"/>
</dbReference>